<feature type="chain" id="PRO_0000418273" description="Protein TRS1">
    <location>
        <begin position="1"/>
        <end position="788"/>
    </location>
</feature>
<feature type="region of interest" description="Disordered" evidence="3">
    <location>
        <begin position="1"/>
        <end position="82"/>
    </location>
</feature>
<feature type="region of interest" description="RNA-binding" evidence="2">
    <location>
        <begin position="74"/>
        <end position="248"/>
    </location>
</feature>
<feature type="region of interest" description="Disordered" evidence="3">
    <location>
        <begin position="610"/>
        <end position="663"/>
    </location>
</feature>
<feature type="region of interest" description="Interaction with host EIF2AK2/PKR" evidence="2">
    <location>
        <begin position="672"/>
        <end position="788"/>
    </location>
</feature>
<feature type="compositionally biased region" description="Gly residues" evidence="3">
    <location>
        <begin position="16"/>
        <end position="25"/>
    </location>
</feature>
<feature type="compositionally biased region" description="Low complexity" evidence="3">
    <location>
        <begin position="26"/>
        <end position="56"/>
    </location>
</feature>
<feature type="compositionally biased region" description="Basic and acidic residues" evidence="3">
    <location>
        <begin position="651"/>
        <end position="660"/>
    </location>
</feature>
<name>TRS1_HCMVM</name>
<sequence length="788" mass="83959">MAQRNGMSPRPPPLGRGRGAGGPSGVGSSPPSSCVPMGATSTAGTGASAAPTATPGHGVHRVEPRGPPGAPPSSGNNSNFWHGPERLLLSQIPVERQALTELEYQAMGAVWRAAFLANSTGRAMRKWSQRDAGTLLPLGRPYGFYARVTPRSQMNGVGATDLRQLSPRDAWIVLVATVVHEVDPAADPTVGDKAGHPEGLCAQDGLYLALGAGFRVFVYDLANNTLILAARDADEWFRHGAGEVVRLYRCNRLGVGTPRATLLPQPALRQTLLRAEEATALGRELRRRWAGTTVALQTPGRRLQPMVLLGAWQELAQYEPFASAPHPASLLTAVRRHLNQRLCCGWLALGAVLPARWLGCAAGPATGTTSPPAASGTETEAAGGDAPCAMAGAVGSAVTIPPQPYGGAGGSAICVPNADAHAVVGADATAAAAAAAAAPTVMVGPTAMAGPAASGTVPRAMLVVVLDELGAVFGYCPLDGHVYPLAAELSHFLRAGVLGALALGRESAPAAEAARRLLPELDREQWERPRWDALHLHPRAALWAREPHGQLAFLLRPGRGEAEVLTLATKHPVICANVEDYLQDARRRADAQALGLDLATVVMEAGGQMIHKKTKKPKGKEDESVMKGKHSRYTRPTEPPLTPQASLGRALRRDDEDWKPSRVPGEDSWYDLDETFWVLGSNRKNDVYQRRWKKTVLRCGLEIDRPMPTVPKGCRPQTFTHEGIQLMGGATQEPLDTGLYAPSHVTSAFVPSVYMPPTVPYPDPAARLCRDMRRVTFSNVATHYHYNA</sequence>
<accession>Q6SVX2</accession>
<accession>D2K3Y4</accession>
<organism>
    <name type="scientific">Human cytomegalovirus (strain Merlin)</name>
    <name type="common">HHV-5</name>
    <name type="synonym">Human herpesvirus 5</name>
    <dbReference type="NCBI Taxonomy" id="295027"/>
    <lineage>
        <taxon>Viruses</taxon>
        <taxon>Duplodnaviria</taxon>
        <taxon>Heunggongvirae</taxon>
        <taxon>Peploviricota</taxon>
        <taxon>Herviviricetes</taxon>
        <taxon>Herpesvirales</taxon>
        <taxon>Orthoherpesviridae</taxon>
        <taxon>Betaherpesvirinae</taxon>
        <taxon>Cytomegalovirus</taxon>
        <taxon>Cytomegalovirus humanbeta5</taxon>
        <taxon>Human cytomegalovirus</taxon>
    </lineage>
</organism>
<organismHost>
    <name type="scientific">Homo sapiens</name>
    <name type="common">Human</name>
    <dbReference type="NCBI Taxonomy" id="9606"/>
</organismHost>
<evidence type="ECO:0000250" key="1"/>
<evidence type="ECO:0000250" key="2">
    <source>
        <dbReference type="UniProtKB" id="P09695"/>
    </source>
</evidence>
<evidence type="ECO:0000256" key="3">
    <source>
        <dbReference type="SAM" id="MobiDB-lite"/>
    </source>
</evidence>
<evidence type="ECO:0000269" key="4">
    <source>
    </source>
</evidence>
<evidence type="ECO:0000305" key="5"/>
<evidence type="ECO:0000305" key="6">
    <source>
    </source>
</evidence>
<gene>
    <name type="primary">TRS1</name>
</gene>
<dbReference type="EMBL" id="AY446894">
    <property type="protein sequence ID" value="AAR31723.1"/>
    <property type="molecule type" value="Genomic_DNA"/>
</dbReference>
<dbReference type="RefSeq" id="YP_081619.1">
    <property type="nucleotide sequence ID" value="NC_006273.2"/>
</dbReference>
<dbReference type="BioGRID" id="1678076">
    <property type="interactions" value="3"/>
</dbReference>
<dbReference type="GeneID" id="3077523"/>
<dbReference type="KEGG" id="vg:3077523"/>
<dbReference type="Reactome" id="R-HSA-9609690">
    <property type="pathway name" value="HCMV Early Events"/>
</dbReference>
<dbReference type="Reactome" id="R-HSA-9610379">
    <property type="pathway name" value="HCMV Late Events"/>
</dbReference>
<dbReference type="Reactome" id="R-HSA-9833482">
    <property type="pathway name" value="PKR-mediated signaling"/>
</dbReference>
<dbReference type="Proteomes" id="UP000000938">
    <property type="component" value="Segment"/>
</dbReference>
<dbReference type="GO" id="GO:0030430">
    <property type="term" value="C:host cell cytoplasm"/>
    <property type="evidence" value="ECO:0007669"/>
    <property type="project" value="UniProtKB-SubCell"/>
</dbReference>
<dbReference type="GO" id="GO:0042025">
    <property type="term" value="C:host cell nucleus"/>
    <property type="evidence" value="ECO:0007669"/>
    <property type="project" value="UniProtKB-SubCell"/>
</dbReference>
<dbReference type="GO" id="GO:0019033">
    <property type="term" value="C:viral tegument"/>
    <property type="evidence" value="ECO:0000304"/>
    <property type="project" value="Reactome"/>
</dbReference>
<dbReference type="GO" id="GO:0030291">
    <property type="term" value="F:protein serine/threonine kinase inhibitor activity"/>
    <property type="evidence" value="ECO:0007669"/>
    <property type="project" value="UniProtKB-KW"/>
</dbReference>
<dbReference type="GO" id="GO:0003723">
    <property type="term" value="F:RNA binding"/>
    <property type="evidence" value="ECO:0007669"/>
    <property type="project" value="UniProtKB-KW"/>
</dbReference>
<dbReference type="GO" id="GO:0140321">
    <property type="term" value="P:symbiont-mediated suppression of host autophagy"/>
    <property type="evidence" value="ECO:0007669"/>
    <property type="project" value="UniProtKB-KW"/>
</dbReference>
<dbReference type="GO" id="GO:0052170">
    <property type="term" value="P:symbiont-mediated suppression of host innate immune response"/>
    <property type="evidence" value="ECO:0007669"/>
    <property type="project" value="UniProtKB-KW"/>
</dbReference>
<dbReference type="GO" id="GO:0039580">
    <property type="term" value="P:symbiont-mediated suppression of host PKR/eIFalpha signaling"/>
    <property type="evidence" value="ECO:0007669"/>
    <property type="project" value="UniProtKB-KW"/>
</dbReference>
<dbReference type="GO" id="GO:0039502">
    <property type="term" value="P:symbiont-mediated suppression of host type I interferon-mediated signaling pathway"/>
    <property type="evidence" value="ECO:0007669"/>
    <property type="project" value="UniProtKB-KW"/>
</dbReference>
<dbReference type="InterPro" id="IPR003360">
    <property type="entry name" value="US22-like"/>
</dbReference>
<dbReference type="Pfam" id="PF02393">
    <property type="entry name" value="US22"/>
    <property type="match status" value="2"/>
</dbReference>
<proteinExistence type="evidence at protein level"/>
<comment type="function">
    <text evidence="2 4">Inhibits the establishment of the antiviral state in the infected cell. Prevents the phosphorylation of the host eukaryotic translation initiation factor eIF-2alpha/EIF2S1 and thus the shutoff of viral and cellular protein synthesis by directly interacting with EIF2AK2/PKR (PubMed:27780231). Prevents stress granule formation in response to eIF-2alpha/EIF2S1 phosphorylation, thereby rescuing viral replication and protein synthesis (By similarity). Also inhibits host autophagy by interacting with host Beclin-1/BECN1 (By similarity).</text>
</comment>
<comment type="subunit">
    <text evidence="1 6">Interacts with host EIF2AK2/PKR; this interaction retains EIF2AK2 to the host nucleus and prevents its activation (Probable). Interaction (via N-terminus) with host BECN1; this interaction inhibits host autophagy. Interacts with the viral DNA polymerase accessory subunit UL44. Interacts with host HSPA5 (By similarity).</text>
</comment>
<comment type="subcellular location">
    <subcellularLocation>
        <location evidence="2">Virion</location>
    </subcellularLocation>
    <subcellularLocation>
        <location evidence="2">Host cytoplasm</location>
    </subcellularLocation>
    <subcellularLocation>
        <location evidence="2">Host nucleus</location>
    </subcellularLocation>
</comment>
<comment type="domain">
    <text evidence="2">The N-terminus binds RNA. The C-terminus is required to bind and antagonize host EIF2AK2/PKR.</text>
</comment>
<comment type="similarity">
    <text evidence="5">Belongs to the herpesviridae US22 family.</text>
</comment>
<protein>
    <recommendedName>
        <fullName>Protein TRS1</fullName>
    </recommendedName>
</protein>
<reference key="1">
    <citation type="journal article" date="2004" name="J. Gen. Virol.">
        <title>Genetic content of wild-type human cytomegalovirus.</title>
        <authorList>
            <person name="Dolan A."/>
            <person name="Cunningham C."/>
            <person name="Hector R.D."/>
            <person name="Hassan-Walker A.F."/>
            <person name="Lee L."/>
            <person name="Addison C."/>
            <person name="Dargan D.J."/>
            <person name="McGeoch D.J."/>
            <person name="Gatherer D."/>
            <person name="Emery V.C."/>
            <person name="Griffiths P.D."/>
            <person name="Sinzger C."/>
            <person name="McSharry B.P."/>
            <person name="Wilkinson G.W.G."/>
            <person name="Davison A.J."/>
        </authorList>
    </citation>
    <scope>NUCLEOTIDE SEQUENCE [LARGE SCALE GENOMIC DNA]</scope>
</reference>
<reference key="2">
    <citation type="journal article" date="2016" name="PLoS Pathog.">
        <title>A Single Amino Acid Dictates Protein Kinase R Susceptibility to Unrelated Viral Antagonists.</title>
        <authorList>
            <person name="Carpentier K.S."/>
            <person name="Esparo N.M."/>
            <person name="Child S.J."/>
            <person name="Geballe A.P."/>
        </authorList>
    </citation>
    <scope>FUNCTION</scope>
    <scope>INTERACTION WITH HOST EIF2AK2/PKR</scope>
</reference>
<keyword id="KW-1035">Host cytoplasm</keyword>
<keyword id="KW-1048">Host nucleus</keyword>
<keyword id="KW-0945">Host-virus interaction</keyword>
<keyword id="KW-1083">Inhibition of host autophagy by virus</keyword>
<keyword id="KW-1090">Inhibition of host innate immune response by virus</keyword>
<keyword id="KW-1114">Inhibition of host interferon signaling pathway by virus</keyword>
<keyword id="KW-1102">Inhibition of host PKR by virus</keyword>
<keyword id="KW-0922">Interferon antiviral system evasion</keyword>
<keyword id="KW-1185">Reference proteome</keyword>
<keyword id="KW-0694">RNA-binding</keyword>
<keyword id="KW-0899">Viral immunoevasion</keyword>
<keyword id="KW-0946">Virion</keyword>